<gene>
    <name evidence="7" type="primary">Gp-9</name>
</gene>
<accession>Q8WP90</accession>
<accession>A9LKF7</accession>
<accession>A9LKF9</accession>
<accession>A9LKG0</accession>
<accession>A9LKG1</accession>
<accession>A9LKG3</accession>
<accession>A9LKG4</accession>
<accession>A9LKG6</accession>
<accession>A9LKG7</accession>
<accession>A9LKG8</accession>
<accession>A9LKH1</accession>
<accession>A9LKH2</accession>
<accession>A9LKH4</accession>
<accession>A9LKH6</accession>
<accession>A9LKH7</accession>
<accession>A9LKH8</accession>
<accession>A9LKI0</accession>
<accession>A9LKI2</accession>
<accession>A9LKJ0</accession>
<accession>A9LKJ1</accession>
<accession>A9LKJ8</accession>
<accession>A9LKK1</accession>
<accession>A9LKK5</accession>
<accession>A9LKK7</accession>
<accession>A9LKK9</accession>
<accession>A9LKL0</accession>
<accession>A9LKL3</accession>
<accession>A9LKL5</accession>
<accession>A9LKL6</accession>
<accession>A9LKL7</accession>
<accession>A9LKL8</accession>
<accession>A9LKL9</accession>
<accession>A9LKM0</accession>
<accession>A9LKM2</accession>
<accession>A9LKM3</accession>
<accession>A9LKM4</accession>
<accession>A9LKM5</accession>
<accession>A9LKM6</accession>
<accession>A9LKM8</accession>
<accession>A9LKM9</accession>
<accession>A9LKN7</accession>
<accession>A9LKP1</accession>
<accession>A9LKP2</accession>
<accession>A9LKP4</accession>
<accession>A9LKP6</accession>
<accession>A9LKP8</accession>
<accession>A9LKQ0</accession>
<accession>A9LKQ1</accession>
<accession>A9LKQ2</accession>
<accession>A9LKQ7</accession>
<accession>A9LKQ8</accession>
<accession>A9LKR4</accession>
<accession>A9LKR5</accession>
<accession>A9LKR6</accession>
<accession>A9LKR7</accession>
<accession>A9LKS1</accession>
<accession>A9LKS9</accession>
<accession>Q8WP53</accession>
<accession>Q8WRQ2</accession>
<reference evidence="6 7" key="1">
    <citation type="journal article" date="2002" name="Science">
        <title>Identification of a major gene regulating complex social behavior.</title>
        <authorList>
            <person name="Krieger M.J.B."/>
            <person name="Ross K.G."/>
        </authorList>
    </citation>
    <scope>NUCLEOTIDE SEQUENCE [GENOMIC DNA]</scope>
    <scope>PROTEIN SEQUENCE OF N-TERMINUS</scope>
    <scope>POLYMORPHISM</scope>
    <scope>FUNCTION</scope>
</reference>
<reference evidence="6 54" key="2">
    <citation type="journal article" date="2007" name="PLoS ONE">
        <title>Molecular variation at a candidate gene implicated in the regulation of fire ant social behavior.</title>
        <authorList>
            <person name="Gotzek D."/>
            <person name="Shoemaker D.D."/>
            <person name="Ross K.G."/>
        </authorList>
    </citation>
    <scope>NUCLEOTIDE SEQUENCE [GENOMIC DNA]</scope>
    <scope>FUNCTION</scope>
    <scope>VARIANTS</scope>
    <source>
        <strain evidence="99">AR-13d</strain>
        <strain evidence="100">AR-17f</strain>
        <strain evidence="90">AR-25b</strain>
        <strain evidence="93">AR-25e</strain>
        <strain evidence="98">AR-9e</strain>
        <strain evidence="75">B-23</strain>
        <strain evidence="76">B-26/a</strain>
        <strain evidence="77">B-26/b</strain>
        <strain evidence="78">B-26/c</strain>
        <strain evidence="79">B-32</strain>
        <strain evidence="80">B-33</strain>
        <strain evidence="81">B-33/a</strain>
        <strain evidence="82">B-33/f</strain>
        <strain evidence="84">B-43</strain>
        <strain evidence="83">B-43/f</strain>
        <strain evidence="85">B-47</strain>
        <strain evidence="17">BQ-347</strain>
        <strain evidence="18">BQ-348</strain>
        <strain evidence="19">BQ-361</strain>
        <strain evidence="20">BQ-366</strain>
        <strain evidence="21">BQ-367</strain>
        <strain evidence="86">C-20</strain>
        <strain evidence="32">CL-308</strain>
        <strain evidence="33">CL-334</strain>
        <strain evidence="34">CL-336</strain>
        <strain evidence="35">CL-338</strain>
        <strain evidence="26">G-1c</strain>
        <strain evidence="29">G-28</strain>
        <strain evidence="28">G-28/c</strain>
        <strain evidence="27">G-3</strain>
        <strain evidence="30">G-42</strain>
        <strain evidence="31">G-68f</strain>
        <strain evidence="65">G-72</strain>
        <strain evidence="101">G-78</strain>
        <strain evidence="102">G-80</strain>
        <strain evidence="103">G-89</strain>
        <strain evidence="104">G-93</strain>
        <strain evidence="105">G-94</strain>
        <strain evidence="106">G-95</strain>
        <strain evidence="56">LP-719</strain>
        <strain evidence="58">LP-720</strain>
        <strain evidence="57">LP-728</strain>
        <strain evidence="59">LP-729</strain>
        <strain evidence="60">LP-745/a</strain>
        <strain evidence="61">LP-745/b</strain>
        <strain evidence="62">O-23</strain>
        <strain evidence="63">O-40</strain>
        <strain evidence="64">O-70</strain>
        <strain evidence="107">O-78</strain>
        <strain evidence="108">O-88</strain>
        <strain evidence="66">O-98</strain>
        <strain evidence="36">P1-6</strain>
        <strain evidence="37">P1-61</strain>
        <strain evidence="39">P1-65</strain>
        <strain evidence="40">P1-67</strain>
        <strain evidence="38">P1-72</strain>
        <strain evidence="41">P1-81</strain>
        <strain evidence="47">P2-35</strain>
        <strain evidence="48">P2-41</strain>
        <strain evidence="49">P2-44</strain>
        <strain evidence="50">P2-50</strain>
        <strain evidence="51">P2-57</strain>
        <strain evidence="52">P2-66</strain>
        <strain evidence="53">P2-68</strain>
        <strain evidence="54">P2-72</strain>
        <strain evidence="69">Pi-10f</strain>
        <strain evidence="70">Pi-12c</strain>
        <strain evidence="109">Pi-21</strain>
        <strain evidence="110">Pi-25</strain>
        <strain evidence="43">Pi-26</strain>
        <strain evidence="44">Pi-27</strain>
        <strain evidence="46">Pi-28</strain>
        <strain evidence="45">Pi-29</strain>
        <strain evidence="67">Pi-3/a</strain>
        <strain evidence="68">Pi-3/f</strain>
        <strain evidence="94">Pi-47</strain>
        <strain evidence="95">Pi-59</strain>
        <strain evidence="96">Pi-59/c</strain>
        <strain evidence="97">Pi-59/f</strain>
        <strain evidence="121">Pi-65</strain>
        <strain evidence="111">Pi-71</strain>
        <strain evidence="22">Pi-72-nmq-15</strain>
        <strain evidence="23">Pi-72-nmq-24</strain>
        <strain evidence="24">Pi-72-nmq-27</strain>
        <strain evidence="112">Pi-74</strain>
        <strain evidence="113">Pi-78</strain>
        <strain evidence="114">Pi-84</strain>
        <strain evidence="25">Pi-94</strain>
        <strain evidence="15">Pu-11h/c</strain>
        <strain evidence="9">Pu-14a</strain>
        <strain evidence="10">Pu-14c</strain>
        <strain evidence="8">Pu-14f</strain>
        <strain evidence="11">Pu-14r</strain>
        <strain evidence="14">Pu-15a/c</strain>
        <strain evidence="12">Pu-15c</strain>
        <strain evidence="13">Pu-15e</strain>
        <strain evidence="16">Pu-15l</strain>
        <strain evidence="115">Pu-16</strain>
        <strain evidence="116">Pu-17</strain>
        <strain evidence="117">Pu-18</strain>
        <strain evidence="124">Pu-20</strain>
        <strain evidence="118">Pu-21</strain>
        <strain evidence="119">Pu-30</strain>
        <strain evidence="55">Pu-31</strain>
        <strain evidence="122">Pu-34</strain>
        <strain evidence="120">Pu-36</strain>
        <strain evidence="123">Pu-38</strain>
        <strain evidence="91">Pu-39</strain>
        <strain evidence="92">Pu-40</strain>
        <strain evidence="87">Pu-49c</strain>
        <strain evidence="71">Pu-7c</strain>
        <strain evidence="72">Pu-8v</strain>
        <strain evidence="73">Pu-9f</strain>
        <strain evidence="74">Pu-9k</strain>
        <strain evidence="88">SC-643</strain>
        <strain evidence="89">SC-668</strain>
        <strain evidence="42">X-1</strain>
    </source>
</reference>
<comment type="function">
    <text evidence="4 5">Colony queen number, a major feature of social organization, is associated with worker genotype for Gp-9. Colonies are headed by either a single reproductive queen (monogyne form) or multiple queens (polygyne form). Differences in worker Gp-9 genotypes between social forms may cause differences in workers' abilities to recognize queens and regulate their numbers.</text>
</comment>
<comment type="subunit">
    <text evidence="2">Homodimer.</text>
</comment>
<comment type="subcellular location">
    <subcellularLocation>
        <location evidence="1">Secreted</location>
    </subcellularLocation>
</comment>
<comment type="polymorphism">
    <text evidence="4">Allele shown represents B1, B2 and B3, a monogyne population from USA and B1, a monogyne population from Argentina.</text>
</comment>
<comment type="miscellaneous">
    <text evidence="4 5">Workers bearing only the B allele invariably have a single queen, whereas colonies with workers bearing the alternate, b allele have multiple queens. The two social forms differ in many key reproductive and life history characteristics.</text>
</comment>
<comment type="similarity">
    <text evidence="3">Belongs to the PBP/GOBP family.</text>
</comment>
<comment type="online information" name="Protein Spotlight">
    <link uri="https://www.proteinspotlight.org/back_issues/097"/>
    <text>The queen's perfume - Issue 97 of September 2008</text>
</comment>
<feature type="signal peptide" evidence="4">
    <location>
        <begin position="1"/>
        <end position="19"/>
    </location>
</feature>
<feature type="chain" id="PRO_5000061689" description="Pheromone-binding protein Gp-9" evidence="4">
    <location>
        <begin position="20"/>
        <end position="153"/>
    </location>
</feature>
<feature type="disulfide bond" evidence="2">
    <location>
        <begin position="37"/>
        <end position="77"/>
    </location>
</feature>
<feature type="disulfide bond" evidence="2">
    <location>
        <begin position="73"/>
        <end position="129"/>
    </location>
</feature>
<feature type="disulfide bond" evidence="2">
    <location>
        <begin position="118"/>
        <end position="138"/>
    </location>
</feature>
<feature type="sequence variant" description="In AR-17f." evidence="5">
    <location>
        <begin position="2"/>
        <end position="6"/>
    </location>
</feature>
<feature type="sequence variant" description="In strain: LP-728 and Pu-9f." evidence="5">
    <original>F</original>
    <variation>L</variation>
    <location>
        <position position="4"/>
    </location>
</feature>
<feature type="sequence variant" description="In strain: B-26/a, B-33/a, O-70, Pi-3/a, Pi-59 and Pi-72-nmq-15." evidence="5">
    <original>V</original>
    <variation>A</variation>
    <location>
        <position position="5"/>
    </location>
</feature>
<feature type="sequence variant" description="In strain: O-23." evidence="5">
    <original>V</original>
    <variation>E</variation>
    <location>
        <position position="5"/>
    </location>
</feature>
<feature type="sequence variant" description="In strain: SC-643." evidence="5">
    <original>F</original>
    <variation>L</variation>
    <location>
        <position position="9"/>
    </location>
</feature>
<feature type="sequence variant" description="In strain: Pu-39." evidence="5">
    <original>L</original>
    <variation>P</variation>
    <location>
        <position position="13"/>
    </location>
</feature>
<feature type="sequence variant" description="In strain: Pu-7c." evidence="5">
    <original>V</original>
    <variation>M</variation>
    <location>
        <position position="14"/>
    </location>
</feature>
<feature type="sequence variant" description="In strain: Pu-9f." evidence="5">
    <original>F</original>
    <variation>L</variation>
    <location>
        <position position="16"/>
    </location>
</feature>
<feature type="sequence variant" description="In strain: Pi-47." evidence="5">
    <original>F</original>
    <variation>P</variation>
    <location>
        <position position="16"/>
    </location>
</feature>
<feature type="sequence variant" description="In strain: LP-745/a." evidence="5">
    <original>S</original>
    <variation>F</variation>
    <location>
        <position position="18"/>
    </location>
</feature>
<feature type="sequence variant" description="In strain: Pi-72-nmq-24." evidence="5">
    <original>S</original>
    <variation>F</variation>
    <location>
        <position position="20"/>
    </location>
</feature>
<feature type="sequence variant" description="In strain: G-72, G-78, G-80, O-40 and Pi-21." evidence="5">
    <original>R</original>
    <variation>K</variation>
    <location>
        <position position="25"/>
    </location>
</feature>
<feature type="sequence variant" description="In strain: Pi-72-nmq-27." evidence="5">
    <original>K</original>
    <variation>R</variation>
    <location>
        <position position="26"/>
    </location>
</feature>
<feature type="sequence variant" description="In strain: BQ-348." evidence="5">
    <original>I</original>
    <variation>L</variation>
    <location>
        <position position="27"/>
    </location>
</feature>
<feature type="sequence variant" description="In strain: O-40 and Pi-21." evidence="5">
    <original>A</original>
    <variation>E</variation>
    <location>
        <position position="35"/>
    </location>
</feature>
<feature type="sequence variant" description="In strain: Pi-78." evidence="5">
    <original>A</original>
    <variation>I</variation>
    <location>
        <position position="39"/>
    </location>
</feature>
<feature type="sequence variant" description="In allele b1, allele b2 and allele b'." evidence="4">
    <original>A</original>
    <variation>T</variation>
    <location>
        <position position="39"/>
    </location>
</feature>
<feature type="sequence variant" description="In strain: CL-308 and Pu-40." evidence="5">
    <original>A</original>
    <variation>V</variation>
    <location>
        <position position="39"/>
    </location>
</feature>
<feature type="sequence variant" description="In allele b1, allele b2 and allele b'." evidence="4">
    <original>S</original>
    <variation>G</variation>
    <location>
        <position position="42"/>
    </location>
</feature>
<feature type="sequence variant" description="In strain: P2-35." evidence="5">
    <original>L</original>
    <variation>P</variation>
    <location>
        <position position="43"/>
    </location>
</feature>
<feature type="sequence variant" description="In strain: O-40 and Pi-21." evidence="5">
    <original>E</original>
    <variation>D</variation>
    <location>
        <position position="45"/>
    </location>
</feature>
<feature type="sequence variant" description="In strain: O-40 and Pi-21." evidence="5">
    <original>I</original>
    <variation>V</variation>
    <location>
        <position position="48"/>
    </location>
</feature>
<feature type="sequence variant" description="In strain: P1-67." evidence="5">
    <original>I</original>
    <variation>T</variation>
    <location>
        <position position="51"/>
    </location>
</feature>
<feature type="sequence variant" description="In strain: G-78 and Pi-72-nmq-15." evidence="5">
    <original>S</original>
    <variation>L</variation>
    <location>
        <position position="55"/>
    </location>
</feature>
<feature type="sequence variant" description="In strain: G-42 and Pi-78." evidence="5">
    <original>T</original>
    <variation>I</variation>
    <location>
        <position position="61"/>
    </location>
</feature>
<feature type="sequence variant" description="In strain: Pu-39." evidence="5">
    <original>H</original>
    <variation>R</variation>
    <location>
        <position position="63"/>
    </location>
</feature>
<feature type="sequence variant" description="In strain: G-72, G-78, G-80 and Pu-15c." evidence="5">
    <original>D</original>
    <variation>E</variation>
    <location>
        <position position="65"/>
    </location>
</feature>
<feature type="sequence variant" description="In strain: SC-670." evidence="5">
    <original>L</original>
    <variation>P</variation>
    <location>
        <position position="68"/>
    </location>
</feature>
<feature type="sequence variant" description="In strain: O-98." evidence="5">
    <original>H</original>
    <variation>R</variation>
    <location>
        <position position="69"/>
    </location>
</feature>
<feature type="sequence variant" description="In strain: Pu-14c." evidence="5">
    <original>N</original>
    <variation>S</variation>
    <location>
        <position position="71"/>
    </location>
</feature>
<feature type="sequence variant" description="In strain: O-40, Pi-21 and Pi-78." evidence="5">
    <original>M</original>
    <variation>L</variation>
    <location>
        <position position="75"/>
    </location>
</feature>
<feature type="sequence variant" description="In strain: G-72, G-78, G-80, O-40, Pi-21 and Pi-78." evidence="5">
    <original>L</original>
    <variation>M</variation>
    <location>
        <position position="78"/>
    </location>
</feature>
<feature type="sequence variant" description="In strain: BQ-348." evidence="5">
    <original>L</original>
    <variation>S</variation>
    <location>
        <position position="79"/>
    </location>
</feature>
<feature type="sequence variant" description="In strain: O-78." evidence="5">
    <original>D</original>
    <variation>G</variation>
    <location>
        <position position="89"/>
    </location>
</feature>
<feature type="sequence variant" description="In strain: O-88." evidence="5">
    <original>Y</original>
    <variation>H</variation>
    <location>
        <position position="90"/>
    </location>
</feature>
<feature type="sequence variant" description="In allele b1, allele b2 and allele b'." evidence="4">
    <original>M</original>
    <variation>I</variation>
    <location>
        <position position="95"/>
    </location>
</feature>
<feature type="sequence variant" description="In strain: P2-72." evidence="5">
    <original>D</original>
    <variation>N</variation>
    <location>
        <position position="98"/>
    </location>
</feature>
<feature type="sequence variant" description="In strain: Pu-15c." evidence="5">
    <original>I</original>
    <variation>T</variation>
    <location>
        <position position="100"/>
    </location>
</feature>
<feature type="sequence variant" description="In strain: Pi-72-nmq-24." evidence="5">
    <original>K</original>
    <variation>Q</variation>
    <location>
        <position position="101"/>
    </location>
</feature>
<feature type="sequence variant" description="In strain: Pu-8v." evidence="5">
    <original>T</original>
    <variation>S</variation>
    <location>
        <position position="103"/>
    </location>
</feature>
<feature type="sequence variant" description="In strain: Pi-72-nmq-15." evidence="5">
    <original>D</original>
    <variation>G</variation>
    <location>
        <position position="109"/>
    </location>
</feature>
<feature type="sequence variant" description="In strain: Pi-3/a." evidence="5">
    <original>R</original>
    <variation>G</variation>
    <location>
        <position position="111"/>
    </location>
</feature>
<feature type="sequence variant" description="In strain: O-40." evidence="5">
    <original>E</original>
    <variation>K</variation>
    <location>
        <position position="113"/>
    </location>
</feature>
<feature type="sequence variant" description="In strain: BQ-347." evidence="5">
    <original>N</original>
    <variation>S</variation>
    <location>
        <position position="116"/>
    </location>
</feature>
<feature type="sequence variant" description="In allele b1, allele b2 and allele b'." evidence="4">
    <original>A</original>
    <variation>T</variation>
    <location>
        <position position="117"/>
    </location>
</feature>
<feature type="sequence variant" description="In strain: P2-68." evidence="5">
    <original>A</original>
    <variation>V</variation>
    <location>
        <position position="117"/>
    </location>
</feature>
<feature type="sequence variant" description="In strain: O-40, Pi-21 and Pi-78." evidence="5">
    <original>M</original>
    <variation>I</variation>
    <location>
        <position position="119"/>
    </location>
</feature>
<feature type="sequence variant" description="In strain: O-40, Pi-21, G-72, G-78 and G-80." evidence="5">
    <original>Q</original>
    <variation>H</variation>
    <location>
        <position position="120"/>
    </location>
</feature>
<feature type="sequence variant" description="In strain: O-40 and Pi-21." evidence="5">
    <original>K</original>
    <variation>T</variation>
    <location>
        <position position="123"/>
    </location>
</feature>
<feature type="sequence variant" description="In strain: O-86." evidence="5">
    <original>D</original>
    <variation>G</variation>
    <location>
        <position position="124"/>
    </location>
</feature>
<feature type="sequence variant" description="In strain: SC-645." evidence="5">
    <original>M</original>
    <variation>V</variation>
    <location>
        <position position="125"/>
    </location>
</feature>
<feature type="sequence variant" description="In strain: P2-50 and P2-68." evidence="5">
    <original>K</original>
    <variation>R</variation>
    <location>
        <position position="128"/>
    </location>
</feature>
<feature type="sequence variant" description="In allele b1 and allele b2." evidence="4">
    <original>V</original>
    <variation>A</variation>
    <location>
        <position position="136"/>
    </location>
</feature>
<feature type="sequence variant" description="In strain: O-88." evidence="5">
    <original>V</original>
    <variation>I</variation>
    <location>
        <position position="136"/>
    </location>
</feature>
<feature type="sequence variant" description="In strain: LP-728." evidence="5">
    <original>C</original>
    <variation>R</variation>
    <location>
        <position position="138"/>
    </location>
</feature>
<feature type="sequence variant" description="In allele b1, allele b2 and allele b'." evidence="4">
    <original>V</original>
    <variation>I</variation>
    <location>
        <position position="139"/>
    </location>
</feature>
<feature type="sequence variant" description="In strain: Pi-10f." evidence="5">
    <original>A</original>
    <variation>T</variation>
    <location>
        <position position="141"/>
    </location>
</feature>
<feature type="sequence variant" description="In strain: AR-17f." evidence="5">
    <original>A</original>
    <variation>S</variation>
    <location>
        <position position="144"/>
    </location>
</feature>
<feature type="sequence variant" description="In strain: LP-719." evidence="5">
    <original>N</original>
    <variation>H</variation>
    <location>
        <position position="150"/>
    </location>
</feature>
<feature type="sequence variant" description="In strain: B-26/a." evidence="5">
    <original>N</original>
    <variation>I</variation>
    <location>
        <position position="150"/>
    </location>
</feature>
<feature type="sequence variant" description="In strain: AR-25e." evidence="5">
    <original>N</original>
    <variation>S</variation>
    <location>
        <position position="150"/>
    </location>
</feature>
<feature type="sequence variant" description="In allele b1 and allele b2; causes a decreased net negative charge and observed lower mobility." evidence="4">
    <original>E</original>
    <variation>K</variation>
    <location>
        <position position="151"/>
    </location>
</feature>
<feature type="sequence variant" description="In allele b1, allele b2 and allele b'." evidence="4">
    <original>G</original>
    <variation>A</variation>
    <location>
        <position position="152"/>
    </location>
</feature>
<sequence>MKTFVLHIFIFALVAFASASRDSARKIGSQYDNYATCLAEHSLTEDDIFSIGEVSSGQHKTNHEDTELHKNGCVMQCLLEKDGLMSGADYDEEKMREDYIKETGAQPGDQRIEALNACMQETKDMEDKCDKSLLLVACVLAAEAVLADSNEGA</sequence>
<name>PBGP9_SOLIN</name>
<organism>
    <name type="scientific">Solenopsis invicta</name>
    <name type="common">Red imported fire ant</name>
    <name type="synonym">Solenopsis wagneri</name>
    <dbReference type="NCBI Taxonomy" id="13686"/>
    <lineage>
        <taxon>Eukaryota</taxon>
        <taxon>Metazoa</taxon>
        <taxon>Ecdysozoa</taxon>
        <taxon>Arthropoda</taxon>
        <taxon>Hexapoda</taxon>
        <taxon>Insecta</taxon>
        <taxon>Pterygota</taxon>
        <taxon>Neoptera</taxon>
        <taxon>Endopterygota</taxon>
        <taxon>Hymenoptera</taxon>
        <taxon>Apocrita</taxon>
        <taxon>Aculeata</taxon>
        <taxon>Formicoidea</taxon>
        <taxon>Formicidae</taxon>
        <taxon>Myrmicinae</taxon>
        <taxon>Solenopsis</taxon>
    </lineage>
</organism>
<dbReference type="EMBL" id="AF427893">
    <property type="protein sequence ID" value="AAL51119.1"/>
    <property type="molecule type" value="Genomic_DNA"/>
</dbReference>
<dbReference type="EMBL" id="AF427894">
    <property type="protein sequence ID" value="AAL51120.1"/>
    <property type="molecule type" value="Genomic_DNA"/>
</dbReference>
<dbReference type="EMBL" id="AF427897">
    <property type="protein sequence ID" value="AAL51123.1"/>
    <property type="molecule type" value="Genomic_DNA"/>
</dbReference>
<dbReference type="EMBL" id="AF427898">
    <property type="protein sequence ID" value="AAL51124.1"/>
    <property type="molecule type" value="Genomic_DNA"/>
</dbReference>
<dbReference type="EMBL" id="AF427899">
    <property type="protein sequence ID" value="AAL51125.1"/>
    <property type="molecule type" value="Genomic_DNA"/>
</dbReference>
<dbReference type="EMBL" id="AF427900">
    <property type="protein sequence ID" value="AAL51126.1"/>
    <property type="molecule type" value="Genomic_DNA"/>
</dbReference>
<dbReference type="EMBL" id="AF459414">
    <property type="protein sequence ID" value="AAL51133.1"/>
    <property type="molecule type" value="Genomic_DNA"/>
</dbReference>
<dbReference type="EMBL" id="EU220056">
    <property type="protein sequence ID" value="ABX25635.1"/>
    <property type="molecule type" value="Genomic_DNA"/>
</dbReference>
<dbReference type="EMBL" id="EU220057">
    <property type="protein sequence ID" value="ABX25636.1"/>
    <property type="molecule type" value="Genomic_DNA"/>
</dbReference>
<dbReference type="EMBL" id="EU220058">
    <property type="protein sequence ID" value="ABX25637.1"/>
    <property type="molecule type" value="Genomic_DNA"/>
</dbReference>
<dbReference type="EMBL" id="EU220059">
    <property type="protein sequence ID" value="ABX25638.1"/>
    <property type="molecule type" value="Genomic_DNA"/>
</dbReference>
<dbReference type="EMBL" id="EU220060">
    <property type="protein sequence ID" value="ABX25639.1"/>
    <property type="molecule type" value="Genomic_DNA"/>
</dbReference>
<dbReference type="EMBL" id="EU220061">
    <property type="protein sequence ID" value="ABX25640.1"/>
    <property type="molecule type" value="Genomic_DNA"/>
</dbReference>
<dbReference type="EMBL" id="EU220062">
    <property type="protein sequence ID" value="ABX25641.1"/>
    <property type="molecule type" value="Genomic_DNA"/>
</dbReference>
<dbReference type="EMBL" id="EU220063">
    <property type="protein sequence ID" value="ABX25642.1"/>
    <property type="molecule type" value="Genomic_DNA"/>
</dbReference>
<dbReference type="EMBL" id="EU220064">
    <property type="protein sequence ID" value="ABX25643.1"/>
    <property type="molecule type" value="Genomic_DNA"/>
</dbReference>
<dbReference type="EMBL" id="EU220065">
    <property type="protein sequence ID" value="ABX25644.1"/>
    <property type="molecule type" value="Genomic_DNA"/>
</dbReference>
<dbReference type="EMBL" id="EU220066">
    <property type="protein sequence ID" value="ABX25645.1"/>
    <property type="molecule type" value="Genomic_DNA"/>
</dbReference>
<dbReference type="EMBL" id="EU220067">
    <property type="protein sequence ID" value="ABX25646.1"/>
    <property type="molecule type" value="Genomic_DNA"/>
</dbReference>
<dbReference type="EMBL" id="EU220068">
    <property type="protein sequence ID" value="ABX25647.1"/>
    <property type="molecule type" value="Genomic_DNA"/>
</dbReference>
<dbReference type="EMBL" id="EU220069">
    <property type="protein sequence ID" value="ABX25648.1"/>
    <property type="molecule type" value="Genomic_DNA"/>
</dbReference>
<dbReference type="EMBL" id="EU220070">
    <property type="protein sequence ID" value="ABX25649.1"/>
    <property type="molecule type" value="Genomic_DNA"/>
</dbReference>
<dbReference type="EMBL" id="EU220071">
    <property type="protein sequence ID" value="ABX25650.1"/>
    <property type="molecule type" value="Genomic_DNA"/>
</dbReference>
<dbReference type="EMBL" id="EU220072">
    <property type="protein sequence ID" value="ABX25651.1"/>
    <property type="molecule type" value="Genomic_DNA"/>
</dbReference>
<dbReference type="EMBL" id="EU220073">
    <property type="protein sequence ID" value="ABX25652.1"/>
    <property type="molecule type" value="Genomic_DNA"/>
</dbReference>
<dbReference type="EMBL" id="EU220074">
    <property type="protein sequence ID" value="ABX25653.1"/>
    <property type="molecule type" value="Genomic_DNA"/>
</dbReference>
<dbReference type="EMBL" id="EU220075">
    <property type="protein sequence ID" value="ABX25654.1"/>
    <property type="molecule type" value="Genomic_DNA"/>
</dbReference>
<dbReference type="EMBL" id="EU220076">
    <property type="protein sequence ID" value="ABX25655.1"/>
    <property type="molecule type" value="Genomic_DNA"/>
</dbReference>
<dbReference type="EMBL" id="EU220077">
    <property type="protein sequence ID" value="ABX25656.1"/>
    <property type="molecule type" value="Genomic_DNA"/>
</dbReference>
<dbReference type="EMBL" id="EU220078">
    <property type="protein sequence ID" value="ABX25657.1"/>
    <property type="molecule type" value="Genomic_DNA"/>
</dbReference>
<dbReference type="EMBL" id="EU220079">
    <property type="protein sequence ID" value="ABX25658.1"/>
    <property type="molecule type" value="Genomic_DNA"/>
</dbReference>
<dbReference type="EMBL" id="EU220080">
    <property type="protein sequence ID" value="ABX25659.1"/>
    <property type="molecule type" value="Genomic_DNA"/>
</dbReference>
<dbReference type="EMBL" id="EU220081">
    <property type="protein sequence ID" value="ABX25660.1"/>
    <property type="molecule type" value="Genomic_DNA"/>
</dbReference>
<dbReference type="EMBL" id="EU220082">
    <property type="protein sequence ID" value="ABX25661.1"/>
    <property type="molecule type" value="Genomic_DNA"/>
</dbReference>
<dbReference type="EMBL" id="EU220083">
    <property type="protein sequence ID" value="ABX25662.1"/>
    <property type="molecule type" value="Genomic_DNA"/>
</dbReference>
<dbReference type="EMBL" id="EU220084">
    <property type="protein sequence ID" value="ABX25663.1"/>
    <property type="molecule type" value="Genomic_DNA"/>
</dbReference>
<dbReference type="EMBL" id="EU220085">
    <property type="protein sequence ID" value="ABX25664.1"/>
    <property type="molecule type" value="Genomic_DNA"/>
</dbReference>
<dbReference type="EMBL" id="EU220086">
    <property type="protein sequence ID" value="ABX25665.1"/>
    <property type="molecule type" value="Genomic_DNA"/>
</dbReference>
<dbReference type="EMBL" id="EU220087">
    <property type="protein sequence ID" value="ABX25666.1"/>
    <property type="molecule type" value="Genomic_DNA"/>
</dbReference>
<dbReference type="EMBL" id="EU220088">
    <property type="protein sequence ID" value="ABX25667.1"/>
    <property type="molecule type" value="Genomic_DNA"/>
</dbReference>
<dbReference type="EMBL" id="EU220089">
    <property type="protein sequence ID" value="ABX25668.1"/>
    <property type="molecule type" value="Genomic_DNA"/>
</dbReference>
<dbReference type="EMBL" id="EU220090">
    <property type="protein sequence ID" value="ABX25669.1"/>
    <property type="molecule type" value="Genomic_DNA"/>
</dbReference>
<dbReference type="EMBL" id="EU220091">
    <property type="protein sequence ID" value="ABX25670.1"/>
    <property type="molecule type" value="Genomic_DNA"/>
</dbReference>
<dbReference type="EMBL" id="EU220092">
    <property type="protein sequence ID" value="ABX25671.1"/>
    <property type="molecule type" value="Genomic_DNA"/>
</dbReference>
<dbReference type="EMBL" id="EU220093">
    <property type="protein sequence ID" value="ABX25672.1"/>
    <property type="molecule type" value="Genomic_DNA"/>
</dbReference>
<dbReference type="EMBL" id="EU220094">
    <property type="protein sequence ID" value="ABX25673.1"/>
    <property type="molecule type" value="Genomic_DNA"/>
</dbReference>
<dbReference type="EMBL" id="EU220095">
    <property type="protein sequence ID" value="ABX25674.1"/>
    <property type="molecule type" value="Genomic_DNA"/>
</dbReference>
<dbReference type="EMBL" id="EU220096">
    <property type="protein sequence ID" value="ABX25675.1"/>
    <property type="molecule type" value="Genomic_DNA"/>
</dbReference>
<dbReference type="EMBL" id="EU220097">
    <property type="protein sequence ID" value="ABX25676.1"/>
    <property type="molecule type" value="Genomic_DNA"/>
</dbReference>
<dbReference type="EMBL" id="EU220098">
    <property type="protein sequence ID" value="ABX25677.1"/>
    <property type="molecule type" value="Genomic_DNA"/>
</dbReference>
<dbReference type="EMBL" id="EU220099">
    <property type="protein sequence ID" value="ABX25678.1"/>
    <property type="molecule type" value="Genomic_DNA"/>
</dbReference>
<dbReference type="EMBL" id="EU220100">
    <property type="protein sequence ID" value="ABX25679.1"/>
    <property type="molecule type" value="Genomic_DNA"/>
</dbReference>
<dbReference type="EMBL" id="EU220101">
    <property type="protein sequence ID" value="ABX25680.1"/>
    <property type="molecule type" value="Genomic_DNA"/>
</dbReference>
<dbReference type="EMBL" id="EU220102">
    <property type="protein sequence ID" value="ABX25681.1"/>
    <property type="molecule type" value="Genomic_DNA"/>
</dbReference>
<dbReference type="EMBL" id="EU220103">
    <property type="protein sequence ID" value="ABX25682.1"/>
    <property type="molecule type" value="Genomic_DNA"/>
</dbReference>
<dbReference type="EMBL" id="EU220104">
    <property type="protein sequence ID" value="ABX25683.1"/>
    <property type="molecule type" value="Genomic_DNA"/>
</dbReference>
<dbReference type="EMBL" id="EU220105">
    <property type="protein sequence ID" value="ABX25684.1"/>
    <property type="molecule type" value="Genomic_DNA"/>
</dbReference>
<dbReference type="EMBL" id="EU220106">
    <property type="protein sequence ID" value="ABX25685.1"/>
    <property type="molecule type" value="Genomic_DNA"/>
</dbReference>
<dbReference type="EMBL" id="EU220107">
    <property type="protein sequence ID" value="ABX25686.1"/>
    <property type="molecule type" value="Genomic_DNA"/>
</dbReference>
<dbReference type="EMBL" id="EU220108">
    <property type="protein sequence ID" value="ABX25687.1"/>
    <property type="molecule type" value="Genomic_DNA"/>
</dbReference>
<dbReference type="EMBL" id="EU220109">
    <property type="protein sequence ID" value="ABX25688.1"/>
    <property type="molecule type" value="Genomic_DNA"/>
</dbReference>
<dbReference type="EMBL" id="EU220110">
    <property type="protein sequence ID" value="ABX25689.1"/>
    <property type="molecule type" value="Genomic_DNA"/>
</dbReference>
<dbReference type="EMBL" id="EU220111">
    <property type="protein sequence ID" value="ABX25690.1"/>
    <property type="molecule type" value="Genomic_DNA"/>
</dbReference>
<dbReference type="EMBL" id="EU220112">
    <property type="protein sequence ID" value="ABX25691.1"/>
    <property type="molecule type" value="Genomic_DNA"/>
</dbReference>
<dbReference type="EMBL" id="EU220113">
    <property type="protein sequence ID" value="ABX25692.1"/>
    <property type="molecule type" value="Genomic_DNA"/>
</dbReference>
<dbReference type="EMBL" id="EU220114">
    <property type="protein sequence ID" value="ABX25693.1"/>
    <property type="molecule type" value="Genomic_DNA"/>
</dbReference>
<dbReference type="EMBL" id="EU220115">
    <property type="protein sequence ID" value="ABX25694.1"/>
    <property type="molecule type" value="Genomic_DNA"/>
</dbReference>
<dbReference type="EMBL" id="EU220116">
    <property type="protein sequence ID" value="ABX25695.1"/>
    <property type="molecule type" value="Genomic_DNA"/>
</dbReference>
<dbReference type="EMBL" id="EU220117">
    <property type="protein sequence ID" value="ABX25696.1"/>
    <property type="molecule type" value="Genomic_DNA"/>
</dbReference>
<dbReference type="EMBL" id="EU220118">
    <property type="protein sequence ID" value="ABX25697.1"/>
    <property type="molecule type" value="Genomic_DNA"/>
</dbReference>
<dbReference type="EMBL" id="EU220119">
    <property type="protein sequence ID" value="ABX25698.1"/>
    <property type="molecule type" value="Genomic_DNA"/>
</dbReference>
<dbReference type="EMBL" id="EU220120">
    <property type="protein sequence ID" value="ABX25699.1"/>
    <property type="molecule type" value="Genomic_DNA"/>
</dbReference>
<dbReference type="EMBL" id="EU220121">
    <property type="protein sequence ID" value="ABX25700.1"/>
    <property type="molecule type" value="Genomic_DNA"/>
</dbReference>
<dbReference type="EMBL" id="EU220122">
    <property type="protein sequence ID" value="ABX25701.1"/>
    <property type="molecule type" value="Genomic_DNA"/>
</dbReference>
<dbReference type="EMBL" id="EU220123">
    <property type="protein sequence ID" value="ABX25702.1"/>
    <property type="molecule type" value="Genomic_DNA"/>
</dbReference>
<dbReference type="EMBL" id="EU220124">
    <property type="protein sequence ID" value="ABX25703.1"/>
    <property type="molecule type" value="Genomic_DNA"/>
</dbReference>
<dbReference type="EMBL" id="EU220125">
    <property type="protein sequence ID" value="ABX25704.1"/>
    <property type="molecule type" value="Genomic_DNA"/>
</dbReference>
<dbReference type="EMBL" id="EU220126">
    <property type="protein sequence ID" value="ABX25705.1"/>
    <property type="molecule type" value="Genomic_DNA"/>
</dbReference>
<dbReference type="EMBL" id="EU220127">
    <property type="protein sequence ID" value="ABX25706.1"/>
    <property type="molecule type" value="Genomic_DNA"/>
</dbReference>
<dbReference type="EMBL" id="EU220128">
    <property type="protein sequence ID" value="ABX25707.1"/>
    <property type="molecule type" value="Genomic_DNA"/>
</dbReference>
<dbReference type="EMBL" id="EU220129">
    <property type="protein sequence ID" value="ABX25708.1"/>
    <property type="molecule type" value="Genomic_DNA"/>
</dbReference>
<dbReference type="EMBL" id="EU220130">
    <property type="protein sequence ID" value="ABX25709.1"/>
    <property type="molecule type" value="Genomic_DNA"/>
</dbReference>
<dbReference type="EMBL" id="EU220131">
    <property type="protein sequence ID" value="ABX25710.1"/>
    <property type="molecule type" value="Genomic_DNA"/>
</dbReference>
<dbReference type="EMBL" id="EU220132">
    <property type="protein sequence ID" value="ABX25711.1"/>
    <property type="molecule type" value="Genomic_DNA"/>
</dbReference>
<dbReference type="EMBL" id="EU220133">
    <property type="protein sequence ID" value="ABX25712.1"/>
    <property type="molecule type" value="Genomic_DNA"/>
</dbReference>
<dbReference type="EMBL" id="EU220134">
    <property type="protein sequence ID" value="ABX25713.1"/>
    <property type="molecule type" value="Genomic_DNA"/>
</dbReference>
<dbReference type="EMBL" id="EU220135">
    <property type="protein sequence ID" value="ABX25714.1"/>
    <property type="molecule type" value="Genomic_DNA"/>
</dbReference>
<dbReference type="EMBL" id="EU220136">
    <property type="protein sequence ID" value="ABX25715.1"/>
    <property type="molecule type" value="Genomic_DNA"/>
</dbReference>
<dbReference type="EMBL" id="EU220137">
    <property type="protein sequence ID" value="ABX25716.1"/>
    <property type="molecule type" value="Genomic_DNA"/>
</dbReference>
<dbReference type="EMBL" id="EU220138">
    <property type="protein sequence ID" value="ABX25717.1"/>
    <property type="molecule type" value="Genomic_DNA"/>
</dbReference>
<dbReference type="EMBL" id="EU220139">
    <property type="protein sequence ID" value="ABX25718.1"/>
    <property type="molecule type" value="Genomic_DNA"/>
</dbReference>
<dbReference type="EMBL" id="EU220140">
    <property type="protein sequence ID" value="ABX25719.1"/>
    <property type="molecule type" value="Genomic_DNA"/>
</dbReference>
<dbReference type="EMBL" id="EU220141">
    <property type="protein sequence ID" value="ABX25720.1"/>
    <property type="molecule type" value="Genomic_DNA"/>
</dbReference>
<dbReference type="EMBL" id="EU220142">
    <property type="protein sequence ID" value="ABX25721.1"/>
    <property type="molecule type" value="Genomic_DNA"/>
</dbReference>
<dbReference type="EMBL" id="EU220143">
    <property type="protein sequence ID" value="ABX25722.1"/>
    <property type="molecule type" value="Genomic_DNA"/>
</dbReference>
<dbReference type="EMBL" id="EU220144">
    <property type="protein sequence ID" value="ABX25723.1"/>
    <property type="molecule type" value="Genomic_DNA"/>
</dbReference>
<dbReference type="EMBL" id="EU220145">
    <property type="protein sequence ID" value="ABX25724.1"/>
    <property type="molecule type" value="Genomic_DNA"/>
</dbReference>
<dbReference type="EMBL" id="EU220146">
    <property type="protein sequence ID" value="ABX25725.1"/>
    <property type="molecule type" value="Genomic_DNA"/>
</dbReference>
<dbReference type="EMBL" id="EU220147">
    <property type="protein sequence ID" value="ABX25726.1"/>
    <property type="molecule type" value="Genomic_DNA"/>
</dbReference>
<dbReference type="EMBL" id="EU220148">
    <property type="protein sequence ID" value="ABX25727.1"/>
    <property type="molecule type" value="Genomic_DNA"/>
</dbReference>
<dbReference type="EMBL" id="EU220149">
    <property type="protein sequence ID" value="ABX25728.1"/>
    <property type="molecule type" value="Genomic_DNA"/>
</dbReference>
<dbReference type="EMBL" id="EU220150">
    <property type="protein sequence ID" value="ABX25729.1"/>
    <property type="molecule type" value="Genomic_DNA"/>
</dbReference>
<dbReference type="EMBL" id="EU220151">
    <property type="protein sequence ID" value="ABX25730.1"/>
    <property type="molecule type" value="Genomic_DNA"/>
</dbReference>
<dbReference type="EMBL" id="EU220152">
    <property type="protein sequence ID" value="ABX25731.1"/>
    <property type="molecule type" value="Genomic_DNA"/>
</dbReference>
<dbReference type="EMBL" id="EU220153">
    <property type="protein sequence ID" value="ABX25732.1"/>
    <property type="molecule type" value="Genomic_DNA"/>
</dbReference>
<dbReference type="EMBL" id="EU220154">
    <property type="protein sequence ID" value="ABX25733.1"/>
    <property type="molecule type" value="Genomic_DNA"/>
</dbReference>
<dbReference type="EMBL" id="EU220155">
    <property type="protein sequence ID" value="ABX25734.1"/>
    <property type="molecule type" value="Genomic_DNA"/>
</dbReference>
<dbReference type="EMBL" id="EU220156">
    <property type="protein sequence ID" value="ABX25735.1"/>
    <property type="molecule type" value="Genomic_DNA"/>
</dbReference>
<dbReference type="EMBL" id="EU220157">
    <property type="protein sequence ID" value="ABX25736.1"/>
    <property type="molecule type" value="Genomic_DNA"/>
</dbReference>
<dbReference type="EMBL" id="EU220158">
    <property type="protein sequence ID" value="ABX25737.1"/>
    <property type="molecule type" value="Genomic_DNA"/>
</dbReference>
<dbReference type="EMBL" id="EU220159">
    <property type="protein sequence ID" value="ABX25738.1"/>
    <property type="molecule type" value="Genomic_DNA"/>
</dbReference>
<dbReference type="EMBL" id="EU220160">
    <property type="protein sequence ID" value="ABX25739.1"/>
    <property type="molecule type" value="Genomic_DNA"/>
</dbReference>
<dbReference type="EMBL" id="EU220161">
    <property type="protein sequence ID" value="ABX25740.1"/>
    <property type="molecule type" value="Genomic_DNA"/>
</dbReference>
<dbReference type="EMBL" id="EU220162">
    <property type="protein sequence ID" value="ABX25741.1"/>
    <property type="molecule type" value="Genomic_DNA"/>
</dbReference>
<dbReference type="EMBL" id="EU220163">
    <property type="protein sequence ID" value="ABX25742.1"/>
    <property type="molecule type" value="Genomic_DNA"/>
</dbReference>
<dbReference type="EMBL" id="EU220164">
    <property type="protein sequence ID" value="ABX25743.1"/>
    <property type="molecule type" value="Genomic_DNA"/>
</dbReference>
<dbReference type="EMBL" id="EU220165">
    <property type="protein sequence ID" value="ABX25744.1"/>
    <property type="molecule type" value="Genomic_DNA"/>
</dbReference>
<dbReference type="EMBL" id="EU220166">
    <property type="protein sequence ID" value="ABX25745.1"/>
    <property type="molecule type" value="Genomic_DNA"/>
</dbReference>
<dbReference type="EMBL" id="EU220167">
    <property type="protein sequence ID" value="ABX25746.1"/>
    <property type="molecule type" value="Genomic_DNA"/>
</dbReference>
<dbReference type="EMBL" id="EU220168">
    <property type="protein sequence ID" value="ABX25747.1"/>
    <property type="molecule type" value="Genomic_DNA"/>
</dbReference>
<dbReference type="EMBL" id="EU220169">
    <property type="protein sequence ID" value="ABX25748.1"/>
    <property type="molecule type" value="Genomic_DNA"/>
</dbReference>
<dbReference type="EMBL" id="EU220170">
    <property type="protein sequence ID" value="ABX25749.1"/>
    <property type="molecule type" value="Genomic_DNA"/>
</dbReference>
<dbReference type="EMBL" id="EU220171">
    <property type="protein sequence ID" value="ABX25750.1"/>
    <property type="molecule type" value="Genomic_DNA"/>
</dbReference>
<dbReference type="EMBL" id="EU220172">
    <property type="protein sequence ID" value="ABX25751.1"/>
    <property type="molecule type" value="Genomic_DNA"/>
</dbReference>
<dbReference type="EMBL" id="EU220173">
    <property type="protein sequence ID" value="ABX25752.1"/>
    <property type="molecule type" value="Genomic_DNA"/>
</dbReference>
<dbReference type="EMBL" id="EU220174">
    <property type="protein sequence ID" value="ABX25753.1"/>
    <property type="molecule type" value="Genomic_DNA"/>
</dbReference>
<dbReference type="EMBL" id="EU220175">
    <property type="protein sequence ID" value="ABX25754.1"/>
    <property type="molecule type" value="Genomic_DNA"/>
</dbReference>
<dbReference type="EMBL" id="EU220176">
    <property type="protein sequence ID" value="ABX25755.1"/>
    <property type="molecule type" value="Genomic_DNA"/>
</dbReference>
<dbReference type="EMBL" id="EU220177">
    <property type="protein sequence ID" value="ABX25756.1"/>
    <property type="molecule type" value="Genomic_DNA"/>
</dbReference>
<dbReference type="EMBL" id="EU220178">
    <property type="protein sequence ID" value="ABX25757.1"/>
    <property type="molecule type" value="Genomic_DNA"/>
</dbReference>
<dbReference type="EMBL" id="EU220179">
    <property type="protein sequence ID" value="ABX25758.1"/>
    <property type="molecule type" value="Genomic_DNA"/>
</dbReference>
<dbReference type="EMBL" id="EU220180">
    <property type="protein sequence ID" value="ABX25759.1"/>
    <property type="molecule type" value="Genomic_DNA"/>
</dbReference>
<dbReference type="EMBL" id="EU220181">
    <property type="protein sequence ID" value="ABX25760.1"/>
    <property type="molecule type" value="Genomic_DNA"/>
</dbReference>
<dbReference type="RefSeq" id="XP_011157711.1">
    <property type="nucleotide sequence ID" value="XM_011159409.1"/>
</dbReference>
<dbReference type="SMR" id="Q8WP90"/>
<dbReference type="EnsemblMetazoa" id="XM_011159409.3">
    <property type="protein sequence ID" value="XP_011157711.2"/>
    <property type="gene ID" value="LOC105194481"/>
</dbReference>
<dbReference type="GeneID" id="105194481"/>
<dbReference type="KEGG" id="soc:105194481"/>
<dbReference type="OrthoDB" id="7551979at2759"/>
<dbReference type="GO" id="GO:0005615">
    <property type="term" value="C:extracellular space"/>
    <property type="evidence" value="ECO:0000314"/>
    <property type="project" value="UniProtKB"/>
</dbReference>
<dbReference type="GO" id="GO:0005550">
    <property type="term" value="F:pheromone binding"/>
    <property type="evidence" value="ECO:0007669"/>
    <property type="project" value="UniProtKB-KW"/>
</dbReference>
<dbReference type="GO" id="GO:0019236">
    <property type="term" value="P:response to pheromone"/>
    <property type="evidence" value="ECO:0007669"/>
    <property type="project" value="UniProtKB-KW"/>
</dbReference>
<dbReference type="GO" id="GO:0035176">
    <property type="term" value="P:social behavior"/>
    <property type="evidence" value="ECO:0000315"/>
    <property type="project" value="UniProtKB"/>
</dbReference>
<dbReference type="CDD" id="cd23992">
    <property type="entry name" value="PBP_GOBP"/>
    <property type="match status" value="1"/>
</dbReference>
<dbReference type="FunFam" id="1.10.238.20:FF:000004">
    <property type="entry name" value="Pheromone-binding protein Gp-9"/>
    <property type="match status" value="1"/>
</dbReference>
<dbReference type="Gene3D" id="1.10.238.20">
    <property type="entry name" value="Pheromone/general odorant binding protein domain"/>
    <property type="match status" value="1"/>
</dbReference>
<dbReference type="InterPro" id="IPR006170">
    <property type="entry name" value="PBP/GOBP"/>
</dbReference>
<dbReference type="InterPro" id="IPR036728">
    <property type="entry name" value="PBP_GOBP_sf"/>
</dbReference>
<dbReference type="InterPro" id="IPR022354">
    <property type="entry name" value="Pheromone-bd_protein_Gp-9"/>
</dbReference>
<dbReference type="Pfam" id="PF01395">
    <property type="entry name" value="PBP_GOBP"/>
    <property type="match status" value="1"/>
</dbReference>
<dbReference type="PRINTS" id="PR02007">
    <property type="entry name" value="ODORANTBPGP9"/>
</dbReference>
<dbReference type="SUPFAM" id="SSF47565">
    <property type="entry name" value="Insect pheromone/odorant-binding proteins"/>
    <property type="match status" value="1"/>
</dbReference>
<keyword id="KW-0085">Behavior</keyword>
<keyword id="KW-0903">Direct protein sequencing</keyword>
<keyword id="KW-1015">Disulfide bond</keyword>
<keyword id="KW-0589">Pheromone response</keyword>
<keyword id="KW-0590">Pheromone-binding</keyword>
<keyword id="KW-0964">Secreted</keyword>
<keyword id="KW-0732">Signal</keyword>
<keyword id="KW-0813">Transport</keyword>
<proteinExistence type="evidence at protein level"/>
<evidence type="ECO:0000250" key="1"/>
<evidence type="ECO:0000250" key="2">
    <source>
        <dbReference type="UniProtKB" id="P20797"/>
    </source>
</evidence>
<evidence type="ECO:0000255" key="3"/>
<evidence type="ECO:0000269" key="4">
    <source>
    </source>
</evidence>
<evidence type="ECO:0000269" key="5">
    <source>
    </source>
</evidence>
<evidence type="ECO:0000305" key="6"/>
<evidence type="ECO:0000312" key="7">
    <source>
        <dbReference type="EMBL" id="AAL51119.1"/>
    </source>
</evidence>
<evidence type="ECO:0000312" key="8">
    <source>
        <dbReference type="EMBL" id="ABX25635.1"/>
    </source>
</evidence>
<evidence type="ECO:0000312" key="9">
    <source>
        <dbReference type="EMBL" id="ABX25636.1"/>
    </source>
</evidence>
<evidence type="ECO:0000312" key="10">
    <source>
        <dbReference type="EMBL" id="ABX25637.1"/>
    </source>
</evidence>
<evidence type="ECO:0000312" key="11">
    <source>
        <dbReference type="EMBL" id="ABX25638.1"/>
    </source>
</evidence>
<evidence type="ECO:0000312" key="12">
    <source>
        <dbReference type="EMBL" id="ABX25639.1"/>
    </source>
</evidence>
<evidence type="ECO:0000312" key="13">
    <source>
        <dbReference type="EMBL" id="ABX25640.1"/>
    </source>
</evidence>
<evidence type="ECO:0000312" key="14">
    <source>
        <dbReference type="EMBL" id="ABX25641.1"/>
    </source>
</evidence>
<evidence type="ECO:0000312" key="15">
    <source>
        <dbReference type="EMBL" id="ABX25642.1"/>
    </source>
</evidence>
<evidence type="ECO:0000312" key="16">
    <source>
        <dbReference type="EMBL" id="ABX25643.1"/>
    </source>
</evidence>
<evidence type="ECO:0000312" key="17">
    <source>
        <dbReference type="EMBL" id="ABX25644.1"/>
    </source>
</evidence>
<evidence type="ECO:0000312" key="18">
    <source>
        <dbReference type="EMBL" id="ABX25645.1"/>
    </source>
</evidence>
<evidence type="ECO:0000312" key="19">
    <source>
        <dbReference type="EMBL" id="ABX25646.1"/>
    </source>
</evidence>
<evidence type="ECO:0000312" key="20">
    <source>
        <dbReference type="EMBL" id="ABX25647.1"/>
    </source>
</evidence>
<evidence type="ECO:0000312" key="21">
    <source>
        <dbReference type="EMBL" id="ABX25648.1"/>
    </source>
</evidence>
<evidence type="ECO:0000312" key="22">
    <source>
        <dbReference type="EMBL" id="ABX25649.1"/>
    </source>
</evidence>
<evidence type="ECO:0000312" key="23">
    <source>
        <dbReference type="EMBL" id="ABX25650.1"/>
    </source>
</evidence>
<evidence type="ECO:0000312" key="24">
    <source>
        <dbReference type="EMBL" id="ABX25651.1"/>
    </source>
</evidence>
<evidence type="ECO:0000312" key="25">
    <source>
        <dbReference type="EMBL" id="ABX25653.1"/>
    </source>
</evidence>
<evidence type="ECO:0000312" key="26">
    <source>
        <dbReference type="EMBL" id="ABX25654.1"/>
    </source>
</evidence>
<evidence type="ECO:0000312" key="27">
    <source>
        <dbReference type="EMBL" id="ABX25655.1"/>
    </source>
</evidence>
<evidence type="ECO:0000312" key="28">
    <source>
        <dbReference type="EMBL" id="ABX25656.1"/>
    </source>
</evidence>
<evidence type="ECO:0000312" key="29">
    <source>
        <dbReference type="EMBL" id="ABX25657.1"/>
    </source>
</evidence>
<evidence type="ECO:0000312" key="30">
    <source>
        <dbReference type="EMBL" id="ABX25658.1"/>
    </source>
</evidence>
<evidence type="ECO:0000312" key="31">
    <source>
        <dbReference type="EMBL" id="ABX25659.1"/>
    </source>
</evidence>
<evidence type="ECO:0000312" key="32">
    <source>
        <dbReference type="EMBL" id="ABX25660.1"/>
    </source>
</evidence>
<evidence type="ECO:0000312" key="33">
    <source>
        <dbReference type="EMBL" id="ABX25661.1"/>
    </source>
</evidence>
<evidence type="ECO:0000312" key="34">
    <source>
        <dbReference type="EMBL" id="ABX25662.1"/>
    </source>
</evidence>
<evidence type="ECO:0000312" key="35">
    <source>
        <dbReference type="EMBL" id="ABX25663.1"/>
    </source>
</evidence>
<evidence type="ECO:0000312" key="36">
    <source>
        <dbReference type="EMBL" id="ABX25664.1"/>
    </source>
</evidence>
<evidence type="ECO:0000312" key="37">
    <source>
        <dbReference type="EMBL" id="ABX25665.1"/>
    </source>
</evidence>
<evidence type="ECO:0000312" key="38">
    <source>
        <dbReference type="EMBL" id="ABX25666.1"/>
    </source>
</evidence>
<evidence type="ECO:0000312" key="39">
    <source>
        <dbReference type="EMBL" id="ABX25668.1"/>
    </source>
</evidence>
<evidence type="ECO:0000312" key="40">
    <source>
        <dbReference type="EMBL" id="ABX25669.1"/>
    </source>
</evidence>
<evidence type="ECO:0000312" key="41">
    <source>
        <dbReference type="EMBL" id="ABX25670.1"/>
    </source>
</evidence>
<evidence type="ECO:0000312" key="42">
    <source>
        <dbReference type="EMBL" id="ABX25671.1"/>
    </source>
</evidence>
<evidence type="ECO:0000312" key="43">
    <source>
        <dbReference type="EMBL" id="ABX25672.1"/>
    </source>
</evidence>
<evidence type="ECO:0000312" key="44">
    <source>
        <dbReference type="EMBL" id="ABX25673.1"/>
    </source>
</evidence>
<evidence type="ECO:0000312" key="45">
    <source>
        <dbReference type="EMBL" id="ABX25674.1"/>
    </source>
</evidence>
<evidence type="ECO:0000312" key="46">
    <source>
        <dbReference type="EMBL" id="ABX25675.1"/>
    </source>
</evidence>
<evidence type="ECO:0000312" key="47">
    <source>
        <dbReference type="EMBL" id="ABX25676.1"/>
    </source>
</evidence>
<evidence type="ECO:0000312" key="48">
    <source>
        <dbReference type="EMBL" id="ABX25677.1"/>
    </source>
</evidence>
<evidence type="ECO:0000312" key="49">
    <source>
        <dbReference type="EMBL" id="ABX25678.1"/>
    </source>
</evidence>
<evidence type="ECO:0000312" key="50">
    <source>
        <dbReference type="EMBL" id="ABX25679.1"/>
    </source>
</evidence>
<evidence type="ECO:0000312" key="51">
    <source>
        <dbReference type="EMBL" id="ABX25681.1"/>
    </source>
</evidence>
<evidence type="ECO:0000312" key="52">
    <source>
        <dbReference type="EMBL" id="ABX25682.1"/>
    </source>
</evidence>
<evidence type="ECO:0000312" key="53">
    <source>
        <dbReference type="EMBL" id="ABX25684.1"/>
    </source>
</evidence>
<evidence type="ECO:0000312" key="54">
    <source>
        <dbReference type="EMBL" id="ABX25685.1"/>
    </source>
</evidence>
<evidence type="ECO:0000312" key="55">
    <source>
        <dbReference type="EMBL" id="ABX25686.1"/>
    </source>
</evidence>
<evidence type="ECO:0000312" key="56">
    <source>
        <dbReference type="EMBL" id="ABX25687.1"/>
    </source>
</evidence>
<evidence type="ECO:0000312" key="57">
    <source>
        <dbReference type="EMBL" id="ABX25688.1"/>
    </source>
</evidence>
<evidence type="ECO:0000312" key="58">
    <source>
        <dbReference type="EMBL" id="ABX25689.1"/>
    </source>
</evidence>
<evidence type="ECO:0000312" key="59">
    <source>
        <dbReference type="EMBL" id="ABX25690.1"/>
    </source>
</evidence>
<evidence type="ECO:0000312" key="60">
    <source>
        <dbReference type="EMBL" id="ABX25691.1"/>
    </source>
</evidence>
<evidence type="ECO:0000312" key="61">
    <source>
        <dbReference type="EMBL" id="ABX25692.1"/>
    </source>
</evidence>
<evidence type="ECO:0000312" key="62">
    <source>
        <dbReference type="EMBL" id="ABX25693.1"/>
    </source>
</evidence>
<evidence type="ECO:0000312" key="63">
    <source>
        <dbReference type="EMBL" id="ABX25694.1"/>
    </source>
</evidence>
<evidence type="ECO:0000312" key="64">
    <source>
        <dbReference type="EMBL" id="ABX25695.1"/>
    </source>
</evidence>
<evidence type="ECO:0000312" key="65">
    <source>
        <dbReference type="EMBL" id="ABX25696.1"/>
    </source>
</evidence>
<evidence type="ECO:0000312" key="66">
    <source>
        <dbReference type="EMBL" id="ABX25697.1"/>
    </source>
</evidence>
<evidence type="ECO:0000312" key="67">
    <source>
        <dbReference type="EMBL" id="ABX25698.1"/>
    </source>
</evidence>
<evidence type="ECO:0000312" key="68">
    <source>
        <dbReference type="EMBL" id="ABX25699.1"/>
    </source>
</evidence>
<evidence type="ECO:0000312" key="69">
    <source>
        <dbReference type="EMBL" id="ABX25700.1"/>
    </source>
</evidence>
<evidence type="ECO:0000312" key="70">
    <source>
        <dbReference type="EMBL" id="ABX25701.1"/>
    </source>
</evidence>
<evidence type="ECO:0000312" key="71">
    <source>
        <dbReference type="EMBL" id="ABX25702.1"/>
    </source>
</evidence>
<evidence type="ECO:0000312" key="72">
    <source>
        <dbReference type="EMBL" id="ABX25703.1"/>
    </source>
</evidence>
<evidence type="ECO:0000312" key="73">
    <source>
        <dbReference type="EMBL" id="ABX25704.1"/>
    </source>
</evidence>
<evidence type="ECO:0000312" key="74">
    <source>
        <dbReference type="EMBL" id="ABX25705.1"/>
    </source>
</evidence>
<evidence type="ECO:0000312" key="75">
    <source>
        <dbReference type="EMBL" id="ABX25706.1"/>
    </source>
</evidence>
<evidence type="ECO:0000312" key="76">
    <source>
        <dbReference type="EMBL" id="ABX25707.1"/>
    </source>
</evidence>
<evidence type="ECO:0000312" key="77">
    <source>
        <dbReference type="EMBL" id="ABX25708.1"/>
    </source>
</evidence>
<evidence type="ECO:0000312" key="78">
    <source>
        <dbReference type="EMBL" id="ABX25709.1"/>
    </source>
</evidence>
<evidence type="ECO:0000312" key="79">
    <source>
        <dbReference type="EMBL" id="ABX25710.1"/>
    </source>
</evidence>
<evidence type="ECO:0000312" key="80">
    <source>
        <dbReference type="EMBL" id="ABX25711.1"/>
    </source>
</evidence>
<evidence type="ECO:0000312" key="81">
    <source>
        <dbReference type="EMBL" id="ABX25712.1"/>
    </source>
</evidence>
<evidence type="ECO:0000312" key="82">
    <source>
        <dbReference type="EMBL" id="ABX25713.1"/>
    </source>
</evidence>
<evidence type="ECO:0000312" key="83">
    <source>
        <dbReference type="EMBL" id="ABX25714.1"/>
    </source>
</evidence>
<evidence type="ECO:0000312" key="84">
    <source>
        <dbReference type="EMBL" id="ABX25715.1"/>
    </source>
</evidence>
<evidence type="ECO:0000312" key="85">
    <source>
        <dbReference type="EMBL" id="ABX25716.1"/>
    </source>
</evidence>
<evidence type="ECO:0000312" key="86">
    <source>
        <dbReference type="EMBL" id="ABX25717.1"/>
    </source>
</evidence>
<evidence type="ECO:0000312" key="87">
    <source>
        <dbReference type="EMBL" id="ABX25718.1"/>
    </source>
</evidence>
<evidence type="ECO:0000312" key="88">
    <source>
        <dbReference type="EMBL" id="ABX25719.1"/>
    </source>
</evidence>
<evidence type="ECO:0000312" key="89">
    <source>
        <dbReference type="EMBL" id="ABX25723.1"/>
    </source>
</evidence>
<evidence type="ECO:0000312" key="90">
    <source>
        <dbReference type="EMBL" id="ABX25725.1"/>
    </source>
</evidence>
<evidence type="ECO:0000312" key="91">
    <source>
        <dbReference type="EMBL" id="ABX25726.1"/>
    </source>
</evidence>
<evidence type="ECO:0000312" key="92">
    <source>
        <dbReference type="EMBL" id="ABX25727.1"/>
    </source>
</evidence>
<evidence type="ECO:0000312" key="93">
    <source>
        <dbReference type="EMBL" id="ABX25728.1"/>
    </source>
</evidence>
<evidence type="ECO:0000312" key="94">
    <source>
        <dbReference type="EMBL" id="ABX25729.1"/>
    </source>
</evidence>
<evidence type="ECO:0000312" key="95">
    <source>
        <dbReference type="EMBL" id="ABX25730.1"/>
    </source>
</evidence>
<evidence type="ECO:0000312" key="96">
    <source>
        <dbReference type="EMBL" id="ABX25731.1"/>
    </source>
</evidence>
<evidence type="ECO:0000312" key="97">
    <source>
        <dbReference type="EMBL" id="ABX25732.1"/>
    </source>
</evidence>
<evidence type="ECO:0000312" key="98">
    <source>
        <dbReference type="EMBL" id="ABX25733.1"/>
    </source>
</evidence>
<evidence type="ECO:0000312" key="99">
    <source>
        <dbReference type="EMBL" id="ABX25734.1"/>
    </source>
</evidence>
<evidence type="ECO:0000312" key="100">
    <source>
        <dbReference type="EMBL" id="ABX25735.1"/>
    </source>
</evidence>
<evidence type="ECO:0000312" key="101">
    <source>
        <dbReference type="EMBL" id="ABX25736.1"/>
    </source>
</evidence>
<evidence type="ECO:0000312" key="102">
    <source>
        <dbReference type="EMBL" id="ABX25737.1"/>
    </source>
</evidence>
<evidence type="ECO:0000312" key="103">
    <source>
        <dbReference type="EMBL" id="ABX25738.1"/>
    </source>
</evidence>
<evidence type="ECO:0000312" key="104">
    <source>
        <dbReference type="EMBL" id="ABX25739.1"/>
    </source>
</evidence>
<evidence type="ECO:0000312" key="105">
    <source>
        <dbReference type="EMBL" id="ABX25740.1"/>
    </source>
</evidence>
<evidence type="ECO:0000312" key="106">
    <source>
        <dbReference type="EMBL" id="ABX25741.1"/>
    </source>
</evidence>
<evidence type="ECO:0000312" key="107">
    <source>
        <dbReference type="EMBL" id="ABX25742.1"/>
    </source>
</evidence>
<evidence type="ECO:0000312" key="108">
    <source>
        <dbReference type="EMBL" id="ABX25744.1"/>
    </source>
</evidence>
<evidence type="ECO:0000312" key="109">
    <source>
        <dbReference type="EMBL" id="ABX25745.1"/>
    </source>
</evidence>
<evidence type="ECO:0000312" key="110">
    <source>
        <dbReference type="EMBL" id="ABX25746.1"/>
    </source>
</evidence>
<evidence type="ECO:0000312" key="111">
    <source>
        <dbReference type="EMBL" id="ABX25747.1"/>
    </source>
</evidence>
<evidence type="ECO:0000312" key="112">
    <source>
        <dbReference type="EMBL" id="ABX25748.1"/>
    </source>
</evidence>
<evidence type="ECO:0000312" key="113">
    <source>
        <dbReference type="EMBL" id="ABX25749.1"/>
    </source>
</evidence>
<evidence type="ECO:0000312" key="114">
    <source>
        <dbReference type="EMBL" id="ABX25750.1"/>
    </source>
</evidence>
<evidence type="ECO:0000312" key="115">
    <source>
        <dbReference type="EMBL" id="ABX25751.1"/>
    </source>
</evidence>
<evidence type="ECO:0000312" key="116">
    <source>
        <dbReference type="EMBL" id="ABX25752.1"/>
    </source>
</evidence>
<evidence type="ECO:0000312" key="117">
    <source>
        <dbReference type="EMBL" id="ABX25753.1"/>
    </source>
</evidence>
<evidence type="ECO:0000312" key="118">
    <source>
        <dbReference type="EMBL" id="ABX25754.1"/>
    </source>
</evidence>
<evidence type="ECO:0000312" key="119">
    <source>
        <dbReference type="EMBL" id="ABX25755.1"/>
    </source>
</evidence>
<evidence type="ECO:0000312" key="120">
    <source>
        <dbReference type="EMBL" id="ABX25756.1"/>
    </source>
</evidence>
<evidence type="ECO:0000312" key="121">
    <source>
        <dbReference type="EMBL" id="ABX25757.1"/>
    </source>
</evidence>
<evidence type="ECO:0000312" key="122">
    <source>
        <dbReference type="EMBL" id="ABX25758.1"/>
    </source>
</evidence>
<evidence type="ECO:0000312" key="123">
    <source>
        <dbReference type="EMBL" id="ABX25759.1"/>
    </source>
</evidence>
<evidence type="ECO:0000312" key="124">
    <source>
        <dbReference type="EMBL" id="ABX25760.1"/>
    </source>
</evidence>
<protein>
    <recommendedName>
        <fullName>Pheromone-binding protein Gp-9</fullName>
        <shortName>PBP</shortName>
    </recommendedName>
    <alternativeName>
        <fullName>Putative odorant-binding protein Gp-9</fullName>
    </alternativeName>
</protein>